<organism>
    <name type="scientific">Staphylococcus haemolyticus (strain JCSC1435)</name>
    <dbReference type="NCBI Taxonomy" id="279808"/>
    <lineage>
        <taxon>Bacteria</taxon>
        <taxon>Bacillati</taxon>
        <taxon>Bacillota</taxon>
        <taxon>Bacilli</taxon>
        <taxon>Bacillales</taxon>
        <taxon>Staphylococcaceae</taxon>
        <taxon>Staphylococcus</taxon>
    </lineage>
</organism>
<protein>
    <recommendedName>
        <fullName evidence="1">L-lactate dehydrogenase</fullName>
        <shortName evidence="1">L-LDH</shortName>
        <ecNumber evidence="1">1.1.1.27</ecNumber>
    </recommendedName>
</protein>
<reference key="1">
    <citation type="journal article" date="2005" name="J. Bacteriol.">
        <title>Whole-genome sequencing of Staphylococcus haemolyticus uncovers the extreme plasticity of its genome and the evolution of human-colonizing staphylococcal species.</title>
        <authorList>
            <person name="Takeuchi F."/>
            <person name="Watanabe S."/>
            <person name="Baba T."/>
            <person name="Yuzawa H."/>
            <person name="Ito T."/>
            <person name="Morimoto Y."/>
            <person name="Kuroda M."/>
            <person name="Cui L."/>
            <person name="Takahashi M."/>
            <person name="Ankai A."/>
            <person name="Baba S."/>
            <person name="Fukui S."/>
            <person name="Lee J.C."/>
            <person name="Hiramatsu K."/>
        </authorList>
    </citation>
    <scope>NUCLEOTIDE SEQUENCE [LARGE SCALE GENOMIC DNA]</scope>
    <source>
        <strain>JCSC1435</strain>
    </source>
</reference>
<name>LDH_STAHJ</name>
<keyword id="KW-0963">Cytoplasm</keyword>
<keyword id="KW-0520">NAD</keyword>
<keyword id="KW-0560">Oxidoreductase</keyword>
<keyword id="KW-0597">Phosphoprotein</keyword>
<feature type="chain" id="PRO_0000237561" description="L-lactate dehydrogenase">
    <location>
        <begin position="1"/>
        <end position="318"/>
    </location>
</feature>
<feature type="active site" description="Proton acceptor" evidence="1">
    <location>
        <position position="176"/>
    </location>
</feature>
<feature type="binding site" evidence="1">
    <location>
        <position position="14"/>
    </location>
    <ligand>
        <name>NAD(+)</name>
        <dbReference type="ChEBI" id="CHEBI:57540"/>
    </ligand>
</feature>
<feature type="binding site" evidence="1">
    <location>
        <position position="35"/>
    </location>
    <ligand>
        <name>NAD(+)</name>
        <dbReference type="ChEBI" id="CHEBI:57540"/>
    </ligand>
</feature>
<feature type="binding site" evidence="1">
    <location>
        <position position="40"/>
    </location>
    <ligand>
        <name>NAD(+)</name>
        <dbReference type="ChEBI" id="CHEBI:57540"/>
    </ligand>
</feature>
<feature type="binding site" evidence="1">
    <location>
        <position position="66"/>
    </location>
    <ligand>
        <name>NAD(+)</name>
        <dbReference type="ChEBI" id="CHEBI:57540"/>
    </ligand>
</feature>
<feature type="binding site" evidence="1">
    <location>
        <position position="89"/>
    </location>
    <ligand>
        <name>substrate</name>
    </ligand>
</feature>
<feature type="binding site" evidence="1">
    <location>
        <begin position="121"/>
        <end position="124"/>
    </location>
    <ligand>
        <name>substrate</name>
    </ligand>
</feature>
<feature type="binding site" evidence="1">
    <location>
        <position position="144"/>
    </location>
    <ligand>
        <name>NAD(+)</name>
        <dbReference type="ChEBI" id="CHEBI:57540"/>
    </ligand>
</feature>
<feature type="binding site" evidence="1">
    <location>
        <begin position="149"/>
        <end position="152"/>
    </location>
    <ligand>
        <name>substrate</name>
    </ligand>
</feature>
<feature type="binding site" evidence="1">
    <location>
        <position position="229"/>
    </location>
    <ligand>
        <name>substrate</name>
    </ligand>
</feature>
<feature type="modified residue" description="Phosphotyrosine" evidence="1">
    <location>
        <position position="220"/>
    </location>
</feature>
<accession>Q4L941</accession>
<dbReference type="EC" id="1.1.1.27" evidence="1"/>
<dbReference type="EMBL" id="AP006716">
    <property type="protein sequence ID" value="BAE03834.1"/>
    <property type="molecule type" value="Genomic_DNA"/>
</dbReference>
<dbReference type="RefSeq" id="WP_011274850.1">
    <property type="nucleotide sequence ID" value="NC_007168.1"/>
</dbReference>
<dbReference type="SMR" id="Q4L941"/>
<dbReference type="GeneID" id="93779924"/>
<dbReference type="KEGG" id="sha:SH0525"/>
<dbReference type="eggNOG" id="COG0039">
    <property type="taxonomic scope" value="Bacteria"/>
</dbReference>
<dbReference type="HOGENOM" id="CLU_045401_1_1_9"/>
<dbReference type="OrthoDB" id="9802969at2"/>
<dbReference type="UniPathway" id="UPA00554">
    <property type="reaction ID" value="UER00611"/>
</dbReference>
<dbReference type="Proteomes" id="UP000000543">
    <property type="component" value="Chromosome"/>
</dbReference>
<dbReference type="GO" id="GO:0005737">
    <property type="term" value="C:cytoplasm"/>
    <property type="evidence" value="ECO:0007669"/>
    <property type="project" value="UniProtKB-SubCell"/>
</dbReference>
<dbReference type="GO" id="GO:0004459">
    <property type="term" value="F:L-lactate dehydrogenase activity"/>
    <property type="evidence" value="ECO:0007669"/>
    <property type="project" value="UniProtKB-UniRule"/>
</dbReference>
<dbReference type="GO" id="GO:0006096">
    <property type="term" value="P:glycolytic process"/>
    <property type="evidence" value="ECO:0007669"/>
    <property type="project" value="UniProtKB-UniRule"/>
</dbReference>
<dbReference type="GO" id="GO:0006089">
    <property type="term" value="P:lactate metabolic process"/>
    <property type="evidence" value="ECO:0007669"/>
    <property type="project" value="TreeGrafter"/>
</dbReference>
<dbReference type="CDD" id="cd05291">
    <property type="entry name" value="HicDH_like"/>
    <property type="match status" value="1"/>
</dbReference>
<dbReference type="Gene3D" id="3.90.110.10">
    <property type="entry name" value="Lactate dehydrogenase/glycoside hydrolase, family 4, C-terminal"/>
    <property type="match status" value="1"/>
</dbReference>
<dbReference type="Gene3D" id="3.40.50.720">
    <property type="entry name" value="NAD(P)-binding Rossmann-like Domain"/>
    <property type="match status" value="1"/>
</dbReference>
<dbReference type="HAMAP" id="MF_00488">
    <property type="entry name" value="Lactate_dehydrog"/>
    <property type="match status" value="1"/>
</dbReference>
<dbReference type="InterPro" id="IPR001557">
    <property type="entry name" value="L-lactate/malate_DH"/>
</dbReference>
<dbReference type="InterPro" id="IPR011304">
    <property type="entry name" value="L-lactate_DH"/>
</dbReference>
<dbReference type="InterPro" id="IPR018177">
    <property type="entry name" value="L-lactate_DH_AS"/>
</dbReference>
<dbReference type="InterPro" id="IPR022383">
    <property type="entry name" value="Lactate/malate_DH_C"/>
</dbReference>
<dbReference type="InterPro" id="IPR001236">
    <property type="entry name" value="Lactate/malate_DH_N"/>
</dbReference>
<dbReference type="InterPro" id="IPR015955">
    <property type="entry name" value="Lactate_DH/Glyco_Ohase_4_C"/>
</dbReference>
<dbReference type="InterPro" id="IPR036291">
    <property type="entry name" value="NAD(P)-bd_dom_sf"/>
</dbReference>
<dbReference type="NCBIfam" id="TIGR01771">
    <property type="entry name" value="L-LDH-NAD"/>
    <property type="match status" value="1"/>
</dbReference>
<dbReference type="NCBIfam" id="NF000824">
    <property type="entry name" value="PRK00066.1"/>
    <property type="match status" value="1"/>
</dbReference>
<dbReference type="PANTHER" id="PTHR43128">
    <property type="entry name" value="L-2-HYDROXYCARBOXYLATE DEHYDROGENASE (NAD(P)(+))"/>
    <property type="match status" value="1"/>
</dbReference>
<dbReference type="PANTHER" id="PTHR43128:SF16">
    <property type="entry name" value="L-LACTATE DEHYDROGENASE"/>
    <property type="match status" value="1"/>
</dbReference>
<dbReference type="Pfam" id="PF02866">
    <property type="entry name" value="Ldh_1_C"/>
    <property type="match status" value="1"/>
</dbReference>
<dbReference type="Pfam" id="PF00056">
    <property type="entry name" value="Ldh_1_N"/>
    <property type="match status" value="1"/>
</dbReference>
<dbReference type="PIRSF" id="PIRSF000102">
    <property type="entry name" value="Lac_mal_DH"/>
    <property type="match status" value="1"/>
</dbReference>
<dbReference type="PRINTS" id="PR00086">
    <property type="entry name" value="LLDHDRGNASE"/>
</dbReference>
<dbReference type="SUPFAM" id="SSF56327">
    <property type="entry name" value="LDH C-terminal domain-like"/>
    <property type="match status" value="1"/>
</dbReference>
<dbReference type="SUPFAM" id="SSF51735">
    <property type="entry name" value="NAD(P)-binding Rossmann-fold domains"/>
    <property type="match status" value="1"/>
</dbReference>
<dbReference type="PROSITE" id="PS00064">
    <property type="entry name" value="L_LDH"/>
    <property type="match status" value="1"/>
</dbReference>
<evidence type="ECO:0000255" key="1">
    <source>
        <dbReference type="HAMAP-Rule" id="MF_00488"/>
    </source>
</evidence>
<comment type="function">
    <text evidence="1">Catalyzes the conversion of lactate to pyruvate.</text>
</comment>
<comment type="catalytic activity">
    <reaction evidence="1">
        <text>(S)-lactate + NAD(+) = pyruvate + NADH + H(+)</text>
        <dbReference type="Rhea" id="RHEA:23444"/>
        <dbReference type="ChEBI" id="CHEBI:15361"/>
        <dbReference type="ChEBI" id="CHEBI:15378"/>
        <dbReference type="ChEBI" id="CHEBI:16651"/>
        <dbReference type="ChEBI" id="CHEBI:57540"/>
        <dbReference type="ChEBI" id="CHEBI:57945"/>
        <dbReference type="EC" id="1.1.1.27"/>
    </reaction>
</comment>
<comment type="pathway">
    <text evidence="1">Fermentation; pyruvate fermentation to lactate; (S)-lactate from pyruvate: step 1/1.</text>
</comment>
<comment type="subunit">
    <text evidence="1">Homotetramer.</text>
</comment>
<comment type="subcellular location">
    <subcellularLocation>
        <location evidence="1">Cytoplasm</location>
    </subcellularLocation>
</comment>
<comment type="similarity">
    <text evidence="1">Belongs to the LDH/MDH superfamily. LDH family.</text>
</comment>
<sequence length="318" mass="35101">MARHKIVLIGSGYVGSAFAHAIVAKGLVDEMAIIDIDEDKAKADVWDLNHATPFGDNFVNVHVGQYEDFKDADIVVICASAKLAKGETRLKLLEDNVDIFVPMIQRIVDSGFDGYFVLPSNPVDIMSYVVKRVSNFPKNKIIGSGTSLDTARFQFFLSREFDVAPNQVYAPIIGEHGDSQVAVWSHAQIAGEPVLDLLPSNTNLEAFKTSISNRTTQIGYDIYVRKGTTNFGISLSLVRIVEAILFNKNIIMNVSSYVEGEYGLSDVYIGVPTVINRNGADRIIELALSKEELSQLHHSADIILDYQRQADAIIDQMC</sequence>
<proteinExistence type="inferred from homology"/>
<gene>
    <name evidence="1" type="primary">ldh</name>
    <name type="ordered locus">SH0525</name>
</gene>